<organism>
    <name type="scientific">Yersinia pestis bv. Antiqua (strain Antiqua)</name>
    <dbReference type="NCBI Taxonomy" id="360102"/>
    <lineage>
        <taxon>Bacteria</taxon>
        <taxon>Pseudomonadati</taxon>
        <taxon>Pseudomonadota</taxon>
        <taxon>Gammaproteobacteria</taxon>
        <taxon>Enterobacterales</taxon>
        <taxon>Yersiniaceae</taxon>
        <taxon>Yersinia</taxon>
    </lineage>
</organism>
<dbReference type="EMBL" id="CP000308">
    <property type="protein sequence ID" value="ABG11973.1"/>
    <property type="molecule type" value="Genomic_DNA"/>
</dbReference>
<dbReference type="RefSeq" id="WP_002212255.1">
    <property type="nucleotide sequence ID" value="NZ_CP009906.1"/>
</dbReference>
<dbReference type="SMR" id="Q1CC49"/>
<dbReference type="GeneID" id="57974590"/>
<dbReference type="KEGG" id="ypa:YPA_0004"/>
<dbReference type="Proteomes" id="UP000001971">
    <property type="component" value="Chromosome"/>
</dbReference>
<dbReference type="GO" id="GO:0005829">
    <property type="term" value="C:cytosol"/>
    <property type="evidence" value="ECO:0007669"/>
    <property type="project" value="TreeGrafter"/>
</dbReference>
<dbReference type="CDD" id="cd01462">
    <property type="entry name" value="VWA_YIEM_type"/>
    <property type="match status" value="1"/>
</dbReference>
<dbReference type="Gene3D" id="3.40.50.410">
    <property type="entry name" value="von Willebrand factor, type A domain"/>
    <property type="match status" value="1"/>
</dbReference>
<dbReference type="HAMAP" id="MF_01626">
    <property type="entry name" value="ViaA"/>
    <property type="match status" value="1"/>
</dbReference>
<dbReference type="InterPro" id="IPR008912">
    <property type="entry name" value="Uncharacterised_CoxE"/>
</dbReference>
<dbReference type="InterPro" id="IPR023481">
    <property type="entry name" value="Uncharacterised_ViaA"/>
</dbReference>
<dbReference type="InterPro" id="IPR002035">
    <property type="entry name" value="VWF_A"/>
</dbReference>
<dbReference type="InterPro" id="IPR036465">
    <property type="entry name" value="vWFA_dom_sf"/>
</dbReference>
<dbReference type="NCBIfam" id="NF008230">
    <property type="entry name" value="PRK10997.1"/>
    <property type="match status" value="1"/>
</dbReference>
<dbReference type="PANTHER" id="PTHR36846">
    <property type="entry name" value="PROTEIN VIAA"/>
    <property type="match status" value="1"/>
</dbReference>
<dbReference type="PANTHER" id="PTHR36846:SF1">
    <property type="entry name" value="PROTEIN VIAA"/>
    <property type="match status" value="1"/>
</dbReference>
<dbReference type="Pfam" id="PF05762">
    <property type="entry name" value="VWA_CoxE"/>
    <property type="match status" value="1"/>
</dbReference>
<dbReference type="SMART" id="SM00327">
    <property type="entry name" value="VWA"/>
    <property type="match status" value="1"/>
</dbReference>
<dbReference type="SUPFAM" id="SSF53300">
    <property type="entry name" value="vWA-like"/>
    <property type="match status" value="1"/>
</dbReference>
<sequence length="488" mass="56081">MLSLATLDMLLSISEGELIEEMVVGLLAAPQLAIFFEKFPRIKRALMKDIPGWKQNLQQRIREASVPPGLANEFSLYQQSLLEDSPQFYAHLPDIVAQLQDLHSPFATQAKTLVQTADLAKNPPGGDSLQTLFLQRWRVSLILQTITIHHQLLEQEREQLLAELQRRLALSGALEPILTTNDNAAGRLWDMSQGHLQRGDYQLLLQYGDFLQQQPELIRLAEQLGRSRSAKAQPAPDARYEPYTVMVRQPDSVPEEVSGIHQSNDILRLLPTELVMLGMSELEFEFYRRLLERRLLTYRLQGDNWQEKTQQRPVSLKQNDEQPRGPFIVCVDTSGSMGGFNEQCAKAFCLALLRIALADNRRCYIMLFATEIIHYELSADNGIEQAIRFLNQHFRGGTDLAACLANTLNKMEDREWYDADAVIISDFIAQRLPEELVRKIKIQQQAHQHRFHAVAMSAYGKPGIMRIFDHIWRFDTSLKSRLIRRWKR</sequence>
<name>VIAA_YERPA</name>
<protein>
    <recommendedName>
        <fullName evidence="1">Regulatory protein ViaA</fullName>
    </recommendedName>
    <alternativeName>
        <fullName evidence="1">VWA interacting with AAA+ ATPase</fullName>
    </alternativeName>
</protein>
<gene>
    <name evidence="1" type="primary">viaA</name>
    <name type="ordered locus">YPA_0004</name>
</gene>
<proteinExistence type="inferred from homology"/>
<evidence type="ECO:0000255" key="1">
    <source>
        <dbReference type="HAMAP-Rule" id="MF_01626"/>
    </source>
</evidence>
<accession>Q1CC49</accession>
<comment type="function">
    <text evidence="1">Component of the RavA-ViaA chaperone complex, which may act on the membrane to optimize the function of some of the respiratory chains. ViaA stimulates the ATPase activity of RavA.</text>
</comment>
<comment type="subunit">
    <text evidence="1">Homodimer. Interacts with RavA.</text>
</comment>
<comment type="subcellular location">
    <subcellularLocation>
        <location evidence="1">Cytoplasm</location>
    </subcellularLocation>
</comment>
<comment type="similarity">
    <text evidence="1">Belongs to the ViaA family.</text>
</comment>
<keyword id="KW-0143">Chaperone</keyword>
<keyword id="KW-0963">Cytoplasm</keyword>
<reference key="1">
    <citation type="journal article" date="2006" name="J. Bacteriol.">
        <title>Complete genome sequence of Yersinia pestis strains Antiqua and Nepal516: evidence of gene reduction in an emerging pathogen.</title>
        <authorList>
            <person name="Chain P.S.G."/>
            <person name="Hu P."/>
            <person name="Malfatti S.A."/>
            <person name="Radnedge L."/>
            <person name="Larimer F."/>
            <person name="Vergez L.M."/>
            <person name="Worsham P."/>
            <person name="Chu M.C."/>
            <person name="Andersen G.L."/>
        </authorList>
    </citation>
    <scope>NUCLEOTIDE SEQUENCE [LARGE SCALE GENOMIC DNA]</scope>
    <source>
        <strain>Antiqua</strain>
    </source>
</reference>
<feature type="chain" id="PRO_1000069613" description="Regulatory protein ViaA">
    <location>
        <begin position="1"/>
        <end position="488"/>
    </location>
</feature>